<organismHost>
    <name type="scientific">Homo sapiens</name>
    <name type="common">Human</name>
    <dbReference type="NCBI Taxonomy" id="9606"/>
</organismHost>
<evidence type="ECO:0000255" key="1">
    <source>
        <dbReference type="HAMAP-Rule" id="MF_04003"/>
    </source>
</evidence>
<reference key="1">
    <citation type="submission" date="1995-10" db="EMBL/GenBank/DDBJ databases">
        <authorList>
            <person name="Delius H."/>
        </authorList>
    </citation>
    <scope>NUCLEOTIDE SEQUENCE [GENOMIC DNA]</scope>
</reference>
<keyword id="KW-0167">Capsid protein</keyword>
<keyword id="KW-1176">Cytoplasmic inwards viral transport</keyword>
<keyword id="KW-1015">Disulfide bond</keyword>
<keyword id="KW-0238">DNA-binding</keyword>
<keyword id="KW-1039">Host endosome</keyword>
<keyword id="KW-1040">Host Golgi apparatus</keyword>
<keyword id="KW-1048">Host nucleus</keyword>
<keyword id="KW-0945">Host-virus interaction</keyword>
<keyword id="KW-0426">Late protein</keyword>
<keyword id="KW-1177">Microtubular inwards viral transport</keyword>
<keyword id="KW-0597">Phosphoprotein</keyword>
<keyword id="KW-1185">Reference proteome</keyword>
<keyword id="KW-1163">Viral penetration into host nucleus</keyword>
<keyword id="KW-0946">Virion</keyword>
<keyword id="KW-1160">Virus entry into host cell</keyword>
<proteinExistence type="inferred from homology"/>
<gene>
    <name evidence="1" type="primary">L2</name>
</gene>
<sequence length="473" mass="50631">MVAHRARRRKRASATELYKTCKVAGTCPPDVIPKVEGTTLADRILQWGSLGVYLGGLGIGTGSGTGGRTGYVPVGTRPGTVVDVSIPTRPPVVIEPVGPSDPSIVTLLEESSVINSGATIPTFTGTSGFEITSSATTTPAVLDITPAGDNVVITSTNFNNPLFTEPSLLEIPQTGETSGRVLVGTPTSGVHGYEEIPMDTFATSGTGLEPISSTPVPGVSRVAGPRLYGKALTQVRVSDPAFLTQPSSFVTFDNPVYDPEDETIIFERPSPGTRVPDPDFMDIVKLHRPALTSRRGTVRFSRVGQKFSMRTRSGTNIGARVHYYHDLSPILPTEDIELEPLLPPADPTAEESLYDIYADVDEADMAFTGGGRGATTYGGRITPSVFSSTLSTRYGNVTIPFVSPVDVPLHTGPDIILPSSAQWPFVPVAPADTTHYVYIDGGDYFLWPVTFPVSRKRRRKRLSYFLADGFVAL</sequence>
<accession>P50800</accession>
<feature type="chain" id="PRO_0000133596" description="Minor capsid protein L2">
    <location>
        <begin position="1"/>
        <end position="473"/>
    </location>
</feature>
<feature type="short sequence motif" description="Nuclear localization signal" evidence="1">
    <location>
        <begin position="1"/>
        <end position="12"/>
    </location>
</feature>
<feature type="short sequence motif" description="Nuclear localization signal" evidence="1">
    <location>
        <begin position="452"/>
        <end position="462"/>
    </location>
</feature>
<feature type="disulfide bond" evidence="1">
    <location>
        <begin position="21"/>
        <end position="27"/>
    </location>
</feature>
<comment type="function">
    <text evidence="1">Minor protein of the capsid that localizes along the inner surface of the virion, within the central cavities beneath the L1 pentamers. Plays a role in capsid stabilization through interaction with the major capsid protein L1. Once the virion enters the host cell, L2 escorts the genomic DNA into the nucleus by promoting escape from the endosomal compartments and traffic through the host Golgi network. Mechanistically, the C-terminus of L2 possesses a cell-penetrating peptide that protudes from the host endosome, interacts with host cytoplasmic retromer cargo and thereby mediates the capsid delivery to the host trans-Golgi network. Plays a role through its interaction with host dynein in the intracellular microtubule-dependent transport of viral capsid toward the nucleus. Mediates the viral genome import into the nucleus through binding to host importins. Once within the nucleus, L2 localizes viral genomes to host PML bodies in order to activate early gene expression for establishment of infection. Later on, promotes late gene expression by interacting with the viral E2 protein and by inhibiting its transcriptional activation functions. During virion assembly, encapsidates the genome by direct interaction with the viral DNA.</text>
</comment>
<comment type="subunit">
    <text evidence="1">Interacts with major capsid protein L1. Interacts with E2; this interaction inhibits E2 transcriptional activity but not the DNA replication function E2. Interacts with host GADD45GIP1. Interacts with host HSPA8; this interaction is required for L2 nuclear translocation. Interacts with host importins KPNB2 and KPNB3. Forms a complex with importin alpha2-beta1 heterodimers via interaction with the importin alpha2 adapter. Interacts with host DYNLT1; this interaction is essential for virus intracellular transport during entry. Interacts (via C-terminus) with host retromer subunits VPS35 and VPS29.</text>
</comment>
<comment type="subcellular location">
    <subcellularLocation>
        <location evidence="1">Virion</location>
    </subcellularLocation>
    <subcellularLocation>
        <location evidence="1">Host nucleus</location>
    </subcellularLocation>
    <subcellularLocation>
        <location evidence="1">Host early endosome</location>
    </subcellularLocation>
    <subcellularLocation>
        <location evidence="1">Host Golgi apparatus</location>
    </subcellularLocation>
</comment>
<comment type="PTM">
    <text evidence="1">Highly phosphorylated.</text>
</comment>
<comment type="similarity">
    <text evidence="1">Belongs to the papillomaviridae L2 protein family.</text>
</comment>
<protein>
    <recommendedName>
        <fullName evidence="1">Minor capsid protein L2</fullName>
    </recommendedName>
</protein>
<organism>
    <name type="scientific">Human papillomavirus 29</name>
    <dbReference type="NCBI Taxonomy" id="37112"/>
    <lineage>
        <taxon>Viruses</taxon>
        <taxon>Monodnaviria</taxon>
        <taxon>Shotokuvirae</taxon>
        <taxon>Cossaviricota</taxon>
        <taxon>Papovaviricetes</taxon>
        <taxon>Zurhausenvirales</taxon>
        <taxon>Papillomaviridae</taxon>
        <taxon>Firstpapillomavirinae</taxon>
        <taxon>Alphapapillomavirus</taxon>
        <taxon>Alphapapillomavirus 2</taxon>
    </lineage>
</organism>
<name>VL2_HPV29</name>
<dbReference type="EMBL" id="U31784">
    <property type="protein sequence ID" value="AAA79434.1"/>
    <property type="molecule type" value="Genomic_DNA"/>
</dbReference>
<dbReference type="Proteomes" id="UP000009115">
    <property type="component" value="Segment"/>
</dbReference>
<dbReference type="GO" id="GO:0043657">
    <property type="term" value="C:host cell"/>
    <property type="evidence" value="ECO:0007669"/>
    <property type="project" value="GOC"/>
</dbReference>
<dbReference type="GO" id="GO:0044174">
    <property type="term" value="C:host cell endosome"/>
    <property type="evidence" value="ECO:0007669"/>
    <property type="project" value="UniProtKB-KW"/>
</dbReference>
<dbReference type="GO" id="GO:0044177">
    <property type="term" value="C:host cell Golgi apparatus"/>
    <property type="evidence" value="ECO:0007669"/>
    <property type="project" value="UniProtKB-SubCell"/>
</dbReference>
<dbReference type="GO" id="GO:0042025">
    <property type="term" value="C:host cell nucleus"/>
    <property type="evidence" value="ECO:0007669"/>
    <property type="project" value="UniProtKB-SubCell"/>
</dbReference>
<dbReference type="GO" id="GO:0019028">
    <property type="term" value="C:viral capsid"/>
    <property type="evidence" value="ECO:0007669"/>
    <property type="project" value="UniProtKB-UniRule"/>
</dbReference>
<dbReference type="GO" id="GO:0003677">
    <property type="term" value="F:DNA binding"/>
    <property type="evidence" value="ECO:0007669"/>
    <property type="project" value="UniProtKB-UniRule"/>
</dbReference>
<dbReference type="GO" id="GO:0005198">
    <property type="term" value="F:structural molecule activity"/>
    <property type="evidence" value="ECO:0007669"/>
    <property type="project" value="UniProtKB-UniRule"/>
</dbReference>
<dbReference type="GO" id="GO:0075521">
    <property type="term" value="P:microtubule-dependent intracellular transport of viral material towards nucleus"/>
    <property type="evidence" value="ECO:0007669"/>
    <property type="project" value="UniProtKB-UniRule"/>
</dbReference>
<dbReference type="GO" id="GO:0046718">
    <property type="term" value="P:symbiont entry into host cell"/>
    <property type="evidence" value="ECO:0007669"/>
    <property type="project" value="UniProtKB-KW"/>
</dbReference>
<dbReference type="GO" id="GO:0075732">
    <property type="term" value="P:viral penetration into host nucleus"/>
    <property type="evidence" value="ECO:0007669"/>
    <property type="project" value="UniProtKB-KW"/>
</dbReference>
<dbReference type="HAMAP" id="MF_04003">
    <property type="entry name" value="PPV_L2"/>
    <property type="match status" value="1"/>
</dbReference>
<dbReference type="InterPro" id="IPR000784">
    <property type="entry name" value="Late_L2"/>
</dbReference>
<dbReference type="Pfam" id="PF00513">
    <property type="entry name" value="Late_protein_L2"/>
    <property type="match status" value="1"/>
</dbReference>